<evidence type="ECO:0000255" key="1"/>
<evidence type="ECO:0000305" key="2"/>
<name>COS6_YEAST</name>
<feature type="chain" id="PRO_0000207517" description="Protein COS6">
    <location>
        <begin position="1"/>
        <end position="381"/>
    </location>
</feature>
<feature type="topological domain" description="Cytoplasmic" evidence="1">
    <location>
        <begin position="1"/>
        <end position="42"/>
    </location>
</feature>
<feature type="transmembrane region" description="Helical" evidence="1">
    <location>
        <begin position="43"/>
        <end position="63"/>
    </location>
</feature>
<feature type="topological domain" description="Extracellular" evidence="1">
    <location>
        <begin position="64"/>
        <end position="69"/>
    </location>
</feature>
<feature type="transmembrane region" description="Helical" evidence="1">
    <location>
        <begin position="70"/>
        <end position="90"/>
    </location>
</feature>
<feature type="topological domain" description="Cytoplasmic" evidence="1">
    <location>
        <begin position="91"/>
        <end position="381"/>
    </location>
</feature>
<reference key="1">
    <citation type="journal article" date="1997" name="Nature">
        <title>The nucleotide sequence of Saccharomyces cerevisiae chromosome VII.</title>
        <authorList>
            <person name="Tettelin H."/>
            <person name="Agostoni-Carbone M.L."/>
            <person name="Albermann K."/>
            <person name="Albers M."/>
            <person name="Arroyo J."/>
            <person name="Backes U."/>
            <person name="Barreiros T."/>
            <person name="Bertani I."/>
            <person name="Bjourson A.J."/>
            <person name="Brueckner M."/>
            <person name="Bruschi C.V."/>
            <person name="Carignani G."/>
            <person name="Castagnoli L."/>
            <person name="Cerdan E."/>
            <person name="Clemente M.L."/>
            <person name="Coblenz A."/>
            <person name="Coglievina M."/>
            <person name="Coissac E."/>
            <person name="Defoor E."/>
            <person name="Del Bino S."/>
            <person name="Delius H."/>
            <person name="Delneri D."/>
            <person name="de Wergifosse P."/>
            <person name="Dujon B."/>
            <person name="Durand P."/>
            <person name="Entian K.-D."/>
            <person name="Eraso P."/>
            <person name="Escribano V."/>
            <person name="Fabiani L."/>
            <person name="Fartmann B."/>
            <person name="Feroli F."/>
            <person name="Feuermann M."/>
            <person name="Frontali L."/>
            <person name="Garcia-Gonzalez M."/>
            <person name="Garcia-Saez M.I."/>
            <person name="Goffeau A."/>
            <person name="Guerreiro P."/>
            <person name="Hani J."/>
            <person name="Hansen M."/>
            <person name="Hebling U."/>
            <person name="Hernandez K."/>
            <person name="Heumann K."/>
            <person name="Hilger F."/>
            <person name="Hofmann B."/>
            <person name="Indge K.J."/>
            <person name="James C.M."/>
            <person name="Klima R."/>
            <person name="Koetter P."/>
            <person name="Kramer B."/>
            <person name="Kramer W."/>
            <person name="Lauquin G."/>
            <person name="Leuther H."/>
            <person name="Louis E.J."/>
            <person name="Maillier E."/>
            <person name="Marconi A."/>
            <person name="Martegani E."/>
            <person name="Mazon M.J."/>
            <person name="Mazzoni C."/>
            <person name="McReynolds A.D.K."/>
            <person name="Melchioretto P."/>
            <person name="Mewes H.-W."/>
            <person name="Minenkova O."/>
            <person name="Mueller-Auer S."/>
            <person name="Nawrocki A."/>
            <person name="Netter P."/>
            <person name="Neu R."/>
            <person name="Nombela C."/>
            <person name="Oliver S.G."/>
            <person name="Panzeri L."/>
            <person name="Paoluzi S."/>
            <person name="Plevani P."/>
            <person name="Portetelle D."/>
            <person name="Portillo F."/>
            <person name="Potier S."/>
            <person name="Purnelle B."/>
            <person name="Rieger M."/>
            <person name="Riles L."/>
            <person name="Rinaldi T."/>
            <person name="Robben J."/>
            <person name="Rodrigues-Pousada C."/>
            <person name="Rodriguez-Belmonte E."/>
            <person name="Rodriguez-Torres A.M."/>
            <person name="Rose M."/>
            <person name="Ruzzi M."/>
            <person name="Saliola M."/>
            <person name="Sanchez-Perez M."/>
            <person name="Schaefer B."/>
            <person name="Schaefer M."/>
            <person name="Scharfe M."/>
            <person name="Schmidheini T."/>
            <person name="Schreer A."/>
            <person name="Skala J."/>
            <person name="Souciet J.-L."/>
            <person name="Steensma H.Y."/>
            <person name="Talla E."/>
            <person name="Thierry A."/>
            <person name="Vandenbol M."/>
            <person name="van der Aart Q.J.M."/>
            <person name="Van Dyck L."/>
            <person name="Vanoni M."/>
            <person name="Verhasselt P."/>
            <person name="Voet M."/>
            <person name="Volckaert G."/>
            <person name="Wambutt R."/>
            <person name="Watson M.D."/>
            <person name="Weber N."/>
            <person name="Wedler E."/>
            <person name="Wedler H."/>
            <person name="Wipfli P."/>
            <person name="Wolf K."/>
            <person name="Wright L.F."/>
            <person name="Zaccaria P."/>
            <person name="Zimmermann M."/>
            <person name="Zollner A."/>
            <person name="Kleine K."/>
        </authorList>
    </citation>
    <scope>NUCLEOTIDE SEQUENCE [LARGE SCALE GENOMIC DNA]</scope>
    <source>
        <strain>ATCC 204508 / S288c</strain>
    </source>
</reference>
<reference key="2">
    <citation type="journal article" date="2014" name="G3 (Bethesda)">
        <title>The reference genome sequence of Saccharomyces cerevisiae: Then and now.</title>
        <authorList>
            <person name="Engel S.R."/>
            <person name="Dietrich F.S."/>
            <person name="Fisk D.G."/>
            <person name="Binkley G."/>
            <person name="Balakrishnan R."/>
            <person name="Costanzo M.C."/>
            <person name="Dwight S.S."/>
            <person name="Hitz B.C."/>
            <person name="Karra K."/>
            <person name="Nash R.S."/>
            <person name="Weng S."/>
            <person name="Wong E.D."/>
            <person name="Lloyd P."/>
            <person name="Skrzypek M.S."/>
            <person name="Miyasato S.R."/>
            <person name="Simison M."/>
            <person name="Cherry J.M."/>
        </authorList>
    </citation>
    <scope>GENOME REANNOTATION</scope>
    <source>
        <strain>ATCC 204508 / S288c</strain>
    </source>
</reference>
<reference key="3">
    <citation type="journal article" date="2006" name="Proc. Natl. Acad. Sci. U.S.A.">
        <title>A global topology map of the Saccharomyces cerevisiae membrane proteome.</title>
        <authorList>
            <person name="Kim H."/>
            <person name="Melen K."/>
            <person name="Oesterberg M."/>
            <person name="von Heijne G."/>
        </authorList>
    </citation>
    <scope>TOPOLOGY [LARGE SCALE ANALYSIS]</scope>
    <source>
        <strain>ATCC 208353 / W303-1A</strain>
    </source>
</reference>
<gene>
    <name type="primary">COS6</name>
    <name type="ordered locus">YGR295C</name>
</gene>
<accession>P53344</accession>
<accession>D6VV69</accession>
<sequence length="381" mass="45678">MKENELKNEKSVDVLSVKQLESQKTVLPQDLFRSSFTWFCYEIYKSLVFRIWMLLWLPLSVWWKLSNNWIYPLMVSLLVLFWGPVFVLVIFRLSRKRSLSKQLTQFCKEITKNTPSSDPHDWEVVAANLNSYFYENKAWNTKYFFFSAMSCQEAFRTTLLEPFSLKKDEAAKVKSFKDSVPYIEEALEVYFTEVEKQWKLFNSEKSWSPVGLEDAKLPKEAYRFKLTWVLKRIFNRRCLPLFLFYLHNVFISRNDGTIARPLFLVVLFFIMTRDFRNMRMIVLSVKMEHKMQFLSTIINEQESGANGWDEIAKKMNRYLFEKKVWKNEEFFFDGIDCEWFFSHFFYRVLSAKKSMRALSLNVELWPYIKEAQLSCSEESLA</sequence>
<keyword id="KW-0472">Membrane</keyword>
<keyword id="KW-1185">Reference proteome</keyword>
<keyword id="KW-0812">Transmembrane</keyword>
<keyword id="KW-1133">Transmembrane helix</keyword>
<dbReference type="EMBL" id="Z73080">
    <property type="protein sequence ID" value="CAA97328.1"/>
    <property type="molecule type" value="Genomic_DNA"/>
</dbReference>
<dbReference type="EMBL" id="BK006941">
    <property type="protein sequence ID" value="DAA08380.1"/>
    <property type="molecule type" value="Genomic_DNA"/>
</dbReference>
<dbReference type="PIR" id="S64632">
    <property type="entry name" value="S64632"/>
</dbReference>
<dbReference type="RefSeq" id="NP_011811.1">
    <property type="nucleotide sequence ID" value="NM_001181424.1"/>
</dbReference>
<dbReference type="SMR" id="P53344"/>
<dbReference type="BioGRID" id="33542">
    <property type="interactions" value="70"/>
</dbReference>
<dbReference type="DIP" id="DIP-5190N"/>
<dbReference type="FunCoup" id="P53344">
    <property type="interactions" value="67"/>
</dbReference>
<dbReference type="IntAct" id="P53344">
    <property type="interactions" value="4"/>
</dbReference>
<dbReference type="MINT" id="P53344"/>
<dbReference type="STRING" id="4932.YGR295C"/>
<dbReference type="iPTMnet" id="P53344"/>
<dbReference type="PaxDb" id="4932-YGR295C"/>
<dbReference type="PeptideAtlas" id="P53344"/>
<dbReference type="EnsemblFungi" id="YGR295C_mRNA">
    <property type="protein sequence ID" value="YGR295C"/>
    <property type="gene ID" value="YGR295C"/>
</dbReference>
<dbReference type="GeneID" id="853212"/>
<dbReference type="KEGG" id="sce:YGR295C"/>
<dbReference type="AGR" id="SGD:S000003527"/>
<dbReference type="SGD" id="S000003527">
    <property type="gene designation" value="COS6"/>
</dbReference>
<dbReference type="VEuPathDB" id="FungiDB:YGR295C"/>
<dbReference type="eggNOG" id="ENOG502SAGH">
    <property type="taxonomic scope" value="Eukaryota"/>
</dbReference>
<dbReference type="GeneTree" id="ENSGT00940000176283"/>
<dbReference type="HOGENOM" id="CLU_062892_1_0_1"/>
<dbReference type="InParanoid" id="P53344"/>
<dbReference type="OMA" id="RIFNRRC"/>
<dbReference type="OrthoDB" id="4050236at2759"/>
<dbReference type="BioCyc" id="YEAST:G3O-30951-MONOMER"/>
<dbReference type="BioGRID-ORCS" id="853212">
    <property type="hits" value="0 hits in 10 CRISPR screens"/>
</dbReference>
<dbReference type="PRO" id="PR:P53344"/>
<dbReference type="Proteomes" id="UP000002311">
    <property type="component" value="Chromosome VII"/>
</dbReference>
<dbReference type="RNAct" id="P53344">
    <property type="molecule type" value="protein"/>
</dbReference>
<dbReference type="GO" id="GO:0005768">
    <property type="term" value="C:endosome"/>
    <property type="evidence" value="ECO:0000314"/>
    <property type="project" value="SGD"/>
</dbReference>
<dbReference type="GO" id="GO:0000324">
    <property type="term" value="C:fungal-type vacuole"/>
    <property type="evidence" value="ECO:0007005"/>
    <property type="project" value="SGD"/>
</dbReference>
<dbReference type="GO" id="GO:0016020">
    <property type="term" value="C:membrane"/>
    <property type="evidence" value="ECO:0007669"/>
    <property type="project" value="UniProtKB-SubCell"/>
</dbReference>
<dbReference type="GO" id="GO:0043328">
    <property type="term" value="P:protein transport to vacuole involved in ubiquitin-dependent protein catabolic process via the multivesicular body sorting pathway"/>
    <property type="evidence" value="ECO:0000250"/>
    <property type="project" value="SGD"/>
</dbReference>
<dbReference type="InterPro" id="IPR001142">
    <property type="entry name" value="DUP/COS"/>
</dbReference>
<dbReference type="Pfam" id="PF00674">
    <property type="entry name" value="DUP"/>
    <property type="match status" value="2"/>
</dbReference>
<comment type="subcellular location">
    <subcellularLocation>
        <location>Membrane</location>
        <topology>Multi-pass membrane protein</topology>
    </subcellularLocation>
</comment>
<comment type="similarity">
    <text evidence="2">Belongs to the DUP/COS family.</text>
</comment>
<proteinExistence type="evidence at protein level"/>
<protein>
    <recommendedName>
        <fullName>Protein COS6</fullName>
    </recommendedName>
</protein>
<organism>
    <name type="scientific">Saccharomyces cerevisiae (strain ATCC 204508 / S288c)</name>
    <name type="common">Baker's yeast</name>
    <dbReference type="NCBI Taxonomy" id="559292"/>
    <lineage>
        <taxon>Eukaryota</taxon>
        <taxon>Fungi</taxon>
        <taxon>Dikarya</taxon>
        <taxon>Ascomycota</taxon>
        <taxon>Saccharomycotina</taxon>
        <taxon>Saccharomycetes</taxon>
        <taxon>Saccharomycetales</taxon>
        <taxon>Saccharomycetaceae</taxon>
        <taxon>Saccharomyces</taxon>
    </lineage>
</organism>